<evidence type="ECO:0000250" key="1">
    <source>
        <dbReference type="UniProtKB" id="C0HM68"/>
    </source>
</evidence>
<evidence type="ECO:0000250" key="2">
    <source>
        <dbReference type="UniProtKB" id="P61541"/>
    </source>
</evidence>
<evidence type="ECO:0000269" key="3">
    <source>
    </source>
</evidence>
<evidence type="ECO:0000269" key="4">
    <source>
    </source>
</evidence>
<evidence type="ECO:0000269" key="5">
    <source>
    </source>
</evidence>
<evidence type="ECO:0000303" key="6">
    <source>
    </source>
</evidence>
<evidence type="ECO:0000303" key="7">
    <source>
    </source>
</evidence>
<evidence type="ECO:0000305" key="8"/>
<evidence type="ECO:0000305" key="9">
    <source>
    </source>
</evidence>
<accession>C0HL52</accession>
<name>BDSB2_RADCR</name>
<feature type="peptide" id="PRO_0000444937" description="Pi-stichotoxin-Hcr5b" evidence="3">
    <location>
        <begin position="1"/>
        <end position="41"/>
    </location>
</feature>
<feature type="disulfide bond" evidence="2">
    <location>
        <begin position="4"/>
        <end position="37"/>
    </location>
</feature>
<feature type="disulfide bond" evidence="2">
    <location>
        <begin position="6"/>
        <end position="30"/>
    </location>
</feature>
<feature type="disulfide bond" evidence="2">
    <location>
        <begin position="20"/>
        <end position="38"/>
    </location>
</feature>
<proteinExistence type="evidence at protein level"/>
<reference key="1">
    <citation type="journal article" date="2018" name="Peptides">
        <title>New APETx-like peptides from sea anemone Heteractis crispa modulate ASIC1a channels.</title>
        <authorList>
            <person name="Kalina R."/>
            <person name="Gladkikh I."/>
            <person name="Dmitrenok P."/>
            <person name="Chernikov O."/>
            <person name="Koshelev S."/>
            <person name="Kvetkina A."/>
            <person name="Kozlov S."/>
            <person name="Kozlovskaya E."/>
            <person name="Monastyrnaya M."/>
        </authorList>
    </citation>
    <scope>PROTEIN SEQUENCE</scope>
    <scope>FUNCTION</scope>
    <scope>MASS SPECTROMETRY</scope>
</reference>
<reference key="2">
    <citation type="journal article" date="2020" name="Toxins">
        <title>APETx-Like peptides from the sea anemone Heteractis crispa, diverse in their effect on ASIC1a and ASIC3 ion channels.</title>
        <authorList>
            <person name="Kalina R.S."/>
            <person name="Koshelev S.G."/>
            <person name="Zelepuga E.A."/>
            <person name="Kim N.Y."/>
            <person name="Kozlov S.A."/>
            <person name="Kozlovskaya E.P."/>
            <person name="Monastyrnaya M.M."/>
            <person name="Gladkikh I.N."/>
        </authorList>
    </citation>
    <scope>3D-STRUCTURE MODELING IN COMPLEX WITH RAT ASIC1A</scope>
</reference>
<reference key="3">
    <citation type="journal article" date="2022" name="Mar. Drugs">
        <title>A tale of toxin promiscuity: the versatile pharmacological effects of Hcr 1b-2 sea anemone peptide on voltage-gated ion channels.</title>
        <authorList>
            <person name="Pinheiro-Junior E.L."/>
            <person name="Kalina R."/>
            <person name="Gladkikh I."/>
            <person name="Leychenko E."/>
            <person name="Tytgat J."/>
            <person name="Peigneur S."/>
        </authorList>
    </citation>
    <scope>FUNCTION</scope>
</reference>
<comment type="function">
    <text evidence="1 3 4 5">Remarkably non-selective toxin, with activity on many different ion channels (PubMed:29684594, PubMed:35200676). Weakly and reversibly inhibits rat and human homomeric ASIC1 (isoform ASIC1a) (IC(50)=4.8 uM, and IC(50)=14.6 uM), and ASIC3 (IC(50)=15.9 uM) (By similarity) (PubMed:29684594). Molecular modeling interaction with ASIC1a suggests that this peptide hinders the collapse of acidic pockets and stabilizes nonconducting channels state (PubMed:32326130). It activates several potassium channels including Kv1.1/KCNA1, Kv1.2/KCNA2, and drosophila Shaker IR (PubMed:35200676). It moderately to potently inhibits potassium channels including Kv1.3/KCNA3, Kv1.4/KCNA4, Kv1.5/KCNA5, Kv1.6/KCNA6, Kv2.1/KCNB1, Kv4.2/KCND2, Kv7.1/KCNQ1, Kv7.2/Kv7.3 (KCNQ2/KCNQ3), Kv7.4/KCNQ4, hERG/KCNH2, and C.elegans QKT1 (PubMed:35200676). On sodium channels, it moderately to potently inhibits Nav1.1/SCN1A, Nav1.2/SCN2A, Nav1.3/SCN3A, Nav1.4/SCN4A, Nav1.5/SCN5A, Nav1.6/SCN8A, Nav1.7/SCN9A, Nav1.8/SCN10A, and B.germanica BgNav (PubMed:35200676). It also moderately to potently inhibits Cav3.1/CACNA1G, Cav3.2/CACNA1H, and Cav3.3/CACNA1I (PubMed:35200676). Significant shifts in the voltage-current relationship are observed on Kv and Nav, depending on the channel isoform, whereas the toxin does not seem to modulate the voltage-sensor domains of Cav channels, acting mainly as a pore blocker (PubMed:35200676). Does not activate nicotinic acetylcholine receptors (nAChR), but potentiates ACh-elicited current of human alpha-7/CHRNA7 nAChR (By similarity). Is also able to bind T.californica muscle-type nAChRs (By similarity). In vivo, causes an excitatory effect in mice behavior (By similarity). Also shows antihyperalgesic and analgesic activity in the acid-induced muscle pain mice model, and weak anti-inflammatory effect in models of acute local inflammation (By similarity) (PubMed:29684594).</text>
</comment>
<comment type="subcellular location">
    <subcellularLocation>
        <location evidence="8">Secreted</location>
    </subcellularLocation>
    <subcellularLocation>
        <location evidence="8">Nematocyst</location>
    </subcellularLocation>
</comment>
<comment type="mass spectrometry"/>
<comment type="miscellaneous">
    <text evidence="8">A synonymy between H.magnifica and R.crispa is controversial.</text>
</comment>
<comment type="miscellaneous">
    <text evidence="8">The primary structure of this peptide is identical to Hmg 1b-2 from Heteractis magnifica (AC C0HM68).</text>
</comment>
<comment type="miscellaneous">
    <text evidence="1 5">Negative results: does not activate or potentiate the current of human muscle alpha-1-beta-1-delta-epsilon (CHRNA1-CHRNB1-CHRND-CHRNE) nAChRs (By similarity). Does not show activity on Kv3.1/KCNC1, and Kv10.1/KCNH1 potassium channels (By similarity). Does not show activity on Kv3.1/KCNC1, and Kv10.1/KCNH1 potassium channels (PubMed:35200676).</text>
</comment>
<comment type="similarity">
    <text evidence="8">Belongs to the sea anemone type 3 (BDS) potassium channel toxin family.</text>
</comment>
<keyword id="KW-0108">Calcium channel impairing toxin</keyword>
<keyword id="KW-0903">Direct protein sequencing</keyword>
<keyword id="KW-1015">Disulfide bond</keyword>
<keyword id="KW-0872">Ion channel impairing toxin</keyword>
<keyword id="KW-0166">Nematocyst</keyword>
<keyword id="KW-0528">Neurotoxin</keyword>
<keyword id="KW-0632">Potassium channel impairing toxin</keyword>
<keyword id="KW-1275">Proton-gated sodium channel impairing toxin</keyword>
<keyword id="KW-0964">Secreted</keyword>
<keyword id="KW-0800">Toxin</keyword>
<keyword id="KW-1218">Voltage-gated calcium channel impairing toxin</keyword>
<keyword id="KW-1220">Voltage-gated potassium channel impairing toxin</keyword>
<keyword id="KW-0738">Voltage-gated sodium channel impairing toxin</keyword>
<sequence>GTPCKCHGYIGVYWFMLAGCPNGYGYNLSCPYFLGICCVKK</sequence>
<dbReference type="SMR" id="C0HL52"/>
<dbReference type="GO" id="GO:0005576">
    <property type="term" value="C:extracellular region"/>
    <property type="evidence" value="ECO:0007669"/>
    <property type="project" value="UniProtKB-SubCell"/>
</dbReference>
<dbReference type="GO" id="GO:0042151">
    <property type="term" value="C:nematocyst"/>
    <property type="evidence" value="ECO:0007669"/>
    <property type="project" value="UniProtKB-SubCell"/>
</dbReference>
<dbReference type="GO" id="GO:0005246">
    <property type="term" value="F:calcium channel regulator activity"/>
    <property type="evidence" value="ECO:0007669"/>
    <property type="project" value="UniProtKB-KW"/>
</dbReference>
<dbReference type="GO" id="GO:0008200">
    <property type="term" value="F:ion channel inhibitor activity"/>
    <property type="evidence" value="ECO:0007669"/>
    <property type="project" value="InterPro"/>
</dbReference>
<dbReference type="GO" id="GO:0015459">
    <property type="term" value="F:potassium channel regulator activity"/>
    <property type="evidence" value="ECO:0007669"/>
    <property type="project" value="UniProtKB-KW"/>
</dbReference>
<dbReference type="GO" id="GO:0017080">
    <property type="term" value="F:sodium channel regulator activity"/>
    <property type="evidence" value="ECO:0007669"/>
    <property type="project" value="UniProtKB-KW"/>
</dbReference>
<dbReference type="GO" id="GO:0090729">
    <property type="term" value="F:toxin activity"/>
    <property type="evidence" value="ECO:0007669"/>
    <property type="project" value="UniProtKB-KW"/>
</dbReference>
<dbReference type="Gene3D" id="2.20.20.10">
    <property type="entry name" value="Anthopleurin-A"/>
    <property type="match status" value="1"/>
</dbReference>
<dbReference type="InterPro" id="IPR012414">
    <property type="entry name" value="BDS_K_chnl_tox"/>
</dbReference>
<dbReference type="InterPro" id="IPR023355">
    <property type="entry name" value="Myo_ane_neurotoxin_sf"/>
</dbReference>
<dbReference type="Pfam" id="PF07936">
    <property type="entry name" value="Defensin_4"/>
    <property type="match status" value="1"/>
</dbReference>
<dbReference type="SUPFAM" id="SSF57392">
    <property type="entry name" value="Defensin-like"/>
    <property type="match status" value="1"/>
</dbReference>
<protein>
    <recommendedName>
        <fullName evidence="6">Pi-stichotoxin-Hcr5b</fullName>
        <shortName evidence="9">Pi-SHTX-Hcr5b</shortName>
    </recommendedName>
    <alternativeName>
        <fullName evidence="7">APETx-like peptide</fullName>
    </alternativeName>
    <alternativeName>
        <fullName evidence="6 7">Hcr 1b-2</fullName>
    </alternativeName>
</protein>
<organism>
    <name type="scientific">Radianthus crispa</name>
    <name type="common">Leathery sea anemone</name>
    <name type="synonym">Heteractis crispa</name>
    <dbReference type="NCBI Taxonomy" id="3122430"/>
    <lineage>
        <taxon>Eukaryota</taxon>
        <taxon>Metazoa</taxon>
        <taxon>Cnidaria</taxon>
        <taxon>Anthozoa</taxon>
        <taxon>Hexacorallia</taxon>
        <taxon>Actiniaria</taxon>
        <taxon>Stichodactylidae</taxon>
        <taxon>Radianthus</taxon>
    </lineage>
</organism>